<evidence type="ECO:0000250" key="1"/>
<evidence type="ECO:0000305" key="2"/>
<proteinExistence type="evidence at transcript level"/>
<protein>
    <recommendedName>
        <fullName>Assembly protein G7</fullName>
    </recommendedName>
</protein>
<keyword id="KW-1035">Host cytoplasm</keyword>
<keyword id="KW-0597">Phosphoprotein</keyword>
<keyword id="KW-0946">Virion</keyword>
<comment type="function">
    <text evidence="1">Late protein which is a part of a large complex required for early virion morphogenesis. This complex participates in the formation of virosomes and the incorporation of virosomal contents into nascent immature virions (By similarity).</text>
</comment>
<comment type="subunit">
    <text evidence="1">Part of a complex composed of A30, G7, F10 kinase, A15, D2, D3, and J1.</text>
</comment>
<comment type="subcellular location">
    <subcellularLocation>
        <location evidence="1">Host cytoplasm</location>
    </subcellularLocation>
    <subcellularLocation>
        <location evidence="1">Virion</location>
    </subcellularLocation>
    <text evidence="1">Localizes in cytoplasmic virus factories and present in the virion core.</text>
</comment>
<comment type="induction">
    <text>Expressed in the late phase of the viral replicative cycle.</text>
</comment>
<comment type="PTM">
    <text evidence="1">Phosphorylated on serines by F10 kinase, phosphorylation state is regulated by H1 phosphatase.</text>
</comment>
<comment type="PTM">
    <text evidence="1">Undergoes proteolytic processing during morphogenesis, probably required for the transformation of immature virions (IV) into mature virions (MV).</text>
</comment>
<comment type="similarity">
    <text evidence="2">Belongs to the chordopoxvirinae G7 family.</text>
</comment>
<gene>
    <name type="ORF">G7L</name>
</gene>
<sequence>MAAEQRRSTIFDIVSKCIVQSVLRDISINSEYIESKAKQLCYCPASKKESVINGIYNCCESNIEIMDKEQLLKILDNLRCHSAHVCNATDFWRLYNSLKRFTHTTAFFNTCKPTILATLNTLITLILSNKLLYAAEMVEYLENQLDSSNKSMSQELAELLEMKYALINLVQYRILPMIIGEPIIVAGFSGKEPISNYSAEVERLMELPVKTDIVNTTYDFLARKGIDTSNNIAEYIAGLKIEEIEKVEKYLPEVISTIANSNIIKNKKSIFPANINDKQIMECSKMLDTSEKYSKGYKTDGAVTSPLTGNNTITTFIPISASDMQKFTILEYLYIMRVMANNVKKKNEGKNNGGVVMHINSPFKVINLPKC</sequence>
<organismHost>
    <name type="scientific">Homo sapiens</name>
    <name type="common">Human</name>
    <dbReference type="NCBI Taxonomy" id="9606"/>
</organismHost>
<dbReference type="EMBL" id="L22579">
    <property type="protein sequence ID" value="AAA60818.1"/>
    <property type="molecule type" value="Genomic_DNA"/>
</dbReference>
<dbReference type="EMBL" id="X76267">
    <property type="protein sequence ID" value="CAA53875.1"/>
    <property type="molecule type" value="Genomic_DNA"/>
</dbReference>
<dbReference type="PIR" id="D72159">
    <property type="entry name" value="D72159"/>
</dbReference>
<dbReference type="PIR" id="T28508">
    <property type="entry name" value="T28508"/>
</dbReference>
<dbReference type="SMR" id="P0DSU2"/>
<dbReference type="KEGG" id="vg:1486436"/>
<dbReference type="Proteomes" id="UP000119805">
    <property type="component" value="Segment"/>
</dbReference>
<dbReference type="GO" id="GO:0030430">
    <property type="term" value="C:host cell cytoplasm"/>
    <property type="evidence" value="ECO:0007669"/>
    <property type="project" value="UniProtKB-SubCell"/>
</dbReference>
<dbReference type="GO" id="GO:0044423">
    <property type="term" value="C:virion component"/>
    <property type="evidence" value="ECO:0007669"/>
    <property type="project" value="UniProtKB-KW"/>
</dbReference>
<dbReference type="InterPro" id="IPR008787">
    <property type="entry name" value="Poxvirus_G7"/>
</dbReference>
<dbReference type="Pfam" id="PF05503">
    <property type="entry name" value="Pox_G7"/>
    <property type="match status" value="1"/>
</dbReference>
<reference key="1">
    <citation type="journal article" date="1993" name="Nature">
        <title>Potential virulence determinants in terminal regions of variola smallpox virus genome.</title>
        <authorList>
            <person name="Massung R.F."/>
            <person name="Esposito J.J."/>
            <person name="Liu L.I."/>
            <person name="Qi J."/>
            <person name="Utterback T.R."/>
            <person name="Knight J.C."/>
            <person name="Aubin L."/>
            <person name="Yuran T.E."/>
            <person name="Parsons J.M."/>
            <person name="Loparev V.N."/>
            <person name="Selivanov N.A."/>
            <person name="Cavallaro K.F."/>
            <person name="Kerlavage A.R."/>
            <person name="Mahy B.W.J."/>
            <person name="Venter J.C."/>
        </authorList>
    </citation>
    <scope>NUCLEOTIDE SEQUENCE [GENOMIC DNA]</scope>
    <source>
        <strain>Bangladesh-1975</strain>
    </source>
</reference>
<reference key="2">
    <citation type="submission" date="1995-12" db="EMBL/GenBank/DDBJ databases">
        <authorList>
            <person name="Shchelkunov S.N."/>
            <person name="Sosnovtsev S.V."/>
            <person name="Totmenin A.V."/>
            <person name="Resenchuk S.M."/>
            <person name="Blinov V.M."/>
            <person name="Sandakhchiev L.S."/>
        </authorList>
    </citation>
    <scope>NUCLEOTIDE SEQUENCE [GENOMIC DNA]</scope>
    <source>
        <strain>Garcia-1966</strain>
    </source>
</reference>
<accession>P0DSU2</accession>
<accession>P32997</accession>
<feature type="chain" id="PRO_0000448195" description="Assembly protein G7">
    <location>
        <begin position="1"/>
        <end position="371"/>
    </location>
</feature>
<feature type="site" description="Cleavage; by I7 protease" evidence="1">
    <location>
        <begin position="187"/>
        <end position="188"/>
    </location>
</feature>
<feature type="site" description="Cleavage; by I7 protease" evidence="1">
    <location>
        <begin position="238"/>
        <end position="239"/>
    </location>
</feature>
<name>G7_VARV</name>
<organism>
    <name type="scientific">Variola virus</name>
    <dbReference type="NCBI Taxonomy" id="10255"/>
    <lineage>
        <taxon>Viruses</taxon>
        <taxon>Varidnaviria</taxon>
        <taxon>Bamfordvirae</taxon>
        <taxon>Nucleocytoviricota</taxon>
        <taxon>Pokkesviricetes</taxon>
        <taxon>Chitovirales</taxon>
        <taxon>Poxviridae</taxon>
        <taxon>Chordopoxvirinae</taxon>
        <taxon>Orthopoxvirus</taxon>
    </lineage>
</organism>